<protein>
    <recommendedName>
        <fullName evidence="1">ATP-dependent Clp protease proteolytic subunit 1</fullName>
        <ecNumber evidence="1">3.4.21.92</ecNumber>
    </recommendedName>
    <alternativeName>
        <fullName evidence="1">Endopeptidase Clp 1</fullName>
    </alternativeName>
</protein>
<feature type="chain" id="PRO_0000252810" description="ATP-dependent Clp protease proteolytic subunit 1">
    <location>
        <begin position="1"/>
        <end position="203"/>
    </location>
</feature>
<feature type="active site" description="Nucleophile" evidence="1">
    <location>
        <position position="98"/>
    </location>
</feature>
<feature type="active site" evidence="1">
    <location>
        <position position="123"/>
    </location>
</feature>
<dbReference type="EC" id="3.4.21.92" evidence="1"/>
<dbReference type="EMBL" id="AP006861">
    <property type="protein sequence ID" value="BAE80866.1"/>
    <property type="molecule type" value="Genomic_DNA"/>
</dbReference>
<dbReference type="RefSeq" id="WP_011457651.1">
    <property type="nucleotide sequence ID" value="NC_007899.1"/>
</dbReference>
<dbReference type="SMR" id="Q256C2"/>
<dbReference type="STRING" id="264202.CF0094"/>
<dbReference type="MEROPS" id="S14.001"/>
<dbReference type="KEGG" id="cfe:CF0094"/>
<dbReference type="eggNOG" id="COG0740">
    <property type="taxonomic scope" value="Bacteria"/>
</dbReference>
<dbReference type="HOGENOM" id="CLU_058707_3_2_0"/>
<dbReference type="OrthoDB" id="9802800at2"/>
<dbReference type="Proteomes" id="UP000001260">
    <property type="component" value="Chromosome"/>
</dbReference>
<dbReference type="GO" id="GO:0005737">
    <property type="term" value="C:cytoplasm"/>
    <property type="evidence" value="ECO:0007669"/>
    <property type="project" value="UniProtKB-SubCell"/>
</dbReference>
<dbReference type="GO" id="GO:0009368">
    <property type="term" value="C:endopeptidase Clp complex"/>
    <property type="evidence" value="ECO:0007669"/>
    <property type="project" value="TreeGrafter"/>
</dbReference>
<dbReference type="GO" id="GO:0004176">
    <property type="term" value="F:ATP-dependent peptidase activity"/>
    <property type="evidence" value="ECO:0007669"/>
    <property type="project" value="InterPro"/>
</dbReference>
<dbReference type="GO" id="GO:0051117">
    <property type="term" value="F:ATPase binding"/>
    <property type="evidence" value="ECO:0007669"/>
    <property type="project" value="TreeGrafter"/>
</dbReference>
<dbReference type="GO" id="GO:0004252">
    <property type="term" value="F:serine-type endopeptidase activity"/>
    <property type="evidence" value="ECO:0007669"/>
    <property type="project" value="UniProtKB-UniRule"/>
</dbReference>
<dbReference type="GO" id="GO:0006515">
    <property type="term" value="P:protein quality control for misfolded or incompletely synthesized proteins"/>
    <property type="evidence" value="ECO:0007669"/>
    <property type="project" value="TreeGrafter"/>
</dbReference>
<dbReference type="CDD" id="cd07017">
    <property type="entry name" value="S14_ClpP_2"/>
    <property type="match status" value="1"/>
</dbReference>
<dbReference type="FunFam" id="3.90.226.10:FF:000001">
    <property type="entry name" value="ATP-dependent Clp protease proteolytic subunit"/>
    <property type="match status" value="1"/>
</dbReference>
<dbReference type="Gene3D" id="3.90.226.10">
    <property type="entry name" value="2-enoyl-CoA Hydratase, Chain A, domain 1"/>
    <property type="match status" value="1"/>
</dbReference>
<dbReference type="HAMAP" id="MF_00444">
    <property type="entry name" value="ClpP"/>
    <property type="match status" value="1"/>
</dbReference>
<dbReference type="InterPro" id="IPR001907">
    <property type="entry name" value="ClpP"/>
</dbReference>
<dbReference type="InterPro" id="IPR029045">
    <property type="entry name" value="ClpP/crotonase-like_dom_sf"/>
</dbReference>
<dbReference type="InterPro" id="IPR023562">
    <property type="entry name" value="ClpP/TepA"/>
</dbReference>
<dbReference type="InterPro" id="IPR033135">
    <property type="entry name" value="ClpP_His_AS"/>
</dbReference>
<dbReference type="InterPro" id="IPR018215">
    <property type="entry name" value="ClpP_Ser_AS"/>
</dbReference>
<dbReference type="NCBIfam" id="NF001368">
    <property type="entry name" value="PRK00277.1"/>
    <property type="match status" value="1"/>
</dbReference>
<dbReference type="NCBIfam" id="NF009205">
    <property type="entry name" value="PRK12553.1"/>
    <property type="match status" value="1"/>
</dbReference>
<dbReference type="PANTHER" id="PTHR10381">
    <property type="entry name" value="ATP-DEPENDENT CLP PROTEASE PROTEOLYTIC SUBUNIT"/>
    <property type="match status" value="1"/>
</dbReference>
<dbReference type="PANTHER" id="PTHR10381:SF70">
    <property type="entry name" value="ATP-DEPENDENT CLP PROTEASE PROTEOLYTIC SUBUNIT"/>
    <property type="match status" value="1"/>
</dbReference>
<dbReference type="Pfam" id="PF00574">
    <property type="entry name" value="CLP_protease"/>
    <property type="match status" value="1"/>
</dbReference>
<dbReference type="PRINTS" id="PR00127">
    <property type="entry name" value="CLPPROTEASEP"/>
</dbReference>
<dbReference type="SUPFAM" id="SSF52096">
    <property type="entry name" value="ClpP/crotonase"/>
    <property type="match status" value="1"/>
</dbReference>
<dbReference type="PROSITE" id="PS00382">
    <property type="entry name" value="CLP_PROTEASE_HIS"/>
    <property type="match status" value="1"/>
</dbReference>
<dbReference type="PROSITE" id="PS00381">
    <property type="entry name" value="CLP_PROTEASE_SER"/>
    <property type="match status" value="1"/>
</dbReference>
<organism>
    <name type="scientific">Chlamydia felis (strain Fe/C-56)</name>
    <name type="common">Chlamydophila felis</name>
    <dbReference type="NCBI Taxonomy" id="264202"/>
    <lineage>
        <taxon>Bacteria</taxon>
        <taxon>Pseudomonadati</taxon>
        <taxon>Chlamydiota</taxon>
        <taxon>Chlamydiia</taxon>
        <taxon>Chlamydiales</taxon>
        <taxon>Chlamydiaceae</taxon>
        <taxon>Chlamydia/Chlamydophila group</taxon>
        <taxon>Chlamydia</taxon>
    </lineage>
</organism>
<sequence>MTLVPYVVEDTGRGERAMDIYSRLLKDRIVMIGQEITEPLANTVIAQLLFLMSEDPQKDIKVFINSPGGYITAGLAIYDTIRFLGCDVNTYCIGQAASMGALLLSAGTKGKRYALPHSRMMIHQPSGGIIGTSADIQLQAAEILTLKKHLANILSECTGQPVEKIIEDSERDFFMGAEDAISYGLIDKVVSSAKDTKDKDTIS</sequence>
<reference key="1">
    <citation type="journal article" date="2006" name="DNA Res.">
        <title>Genome sequence of the cat pathogen, Chlamydophila felis.</title>
        <authorList>
            <person name="Azuma Y."/>
            <person name="Hirakawa H."/>
            <person name="Yamashita A."/>
            <person name="Cai Y."/>
            <person name="Rahman M.A."/>
            <person name="Suzuki H."/>
            <person name="Mitaku S."/>
            <person name="Toh H."/>
            <person name="Goto S."/>
            <person name="Murakami T."/>
            <person name="Sugi K."/>
            <person name="Hayashi H."/>
            <person name="Fukushi H."/>
            <person name="Hattori M."/>
            <person name="Kuhara S."/>
            <person name="Shirai M."/>
        </authorList>
    </citation>
    <scope>NUCLEOTIDE SEQUENCE [LARGE SCALE GENOMIC DNA]</scope>
    <source>
        <strain>Fe/C-56</strain>
    </source>
</reference>
<evidence type="ECO:0000255" key="1">
    <source>
        <dbReference type="HAMAP-Rule" id="MF_00444"/>
    </source>
</evidence>
<keyword id="KW-0963">Cytoplasm</keyword>
<keyword id="KW-0378">Hydrolase</keyword>
<keyword id="KW-0645">Protease</keyword>
<keyword id="KW-0720">Serine protease</keyword>
<comment type="function">
    <text evidence="1">Cleaves peptides in various proteins in a process that requires ATP hydrolysis. Has a chymotrypsin-like activity. Plays a major role in the degradation of misfolded proteins.</text>
</comment>
<comment type="catalytic activity">
    <reaction evidence="1">
        <text>Hydrolysis of proteins to small peptides in the presence of ATP and magnesium. alpha-casein is the usual test substrate. In the absence of ATP, only oligopeptides shorter than five residues are hydrolyzed (such as succinyl-Leu-Tyr-|-NHMec, and Leu-Tyr-Leu-|-Tyr-Trp, in which cleavage of the -Tyr-|-Leu- and -Tyr-|-Trp bonds also occurs).</text>
        <dbReference type="EC" id="3.4.21.92"/>
    </reaction>
</comment>
<comment type="subunit">
    <text evidence="1">Fourteen ClpP subunits assemble into 2 heptameric rings which stack back to back to give a disk-like structure with a central cavity, resembling the structure of eukaryotic proteasomes.</text>
</comment>
<comment type="subcellular location">
    <subcellularLocation>
        <location evidence="1">Cytoplasm</location>
    </subcellularLocation>
</comment>
<comment type="similarity">
    <text evidence="1">Belongs to the peptidase S14 family.</text>
</comment>
<accession>Q256C2</accession>
<name>CLPP1_CHLFF</name>
<proteinExistence type="inferred from homology"/>
<gene>
    <name evidence="1" type="primary">clpP1</name>
    <name type="ordered locus">CF0094</name>
</gene>